<keyword id="KW-0028">Amino-acid biosynthesis</keyword>
<keyword id="KW-0057">Aromatic amino acid biosynthesis</keyword>
<keyword id="KW-0521">NADP</keyword>
<keyword id="KW-0560">Oxidoreductase</keyword>
<name>AROE_STRS7</name>
<accession>C0MHD5</accession>
<organism>
    <name type="scientific">Streptococcus equi subsp. zooepidemicus (strain H70)</name>
    <dbReference type="NCBI Taxonomy" id="553483"/>
    <lineage>
        <taxon>Bacteria</taxon>
        <taxon>Bacillati</taxon>
        <taxon>Bacillota</taxon>
        <taxon>Bacilli</taxon>
        <taxon>Lactobacillales</taxon>
        <taxon>Streptococcaceae</taxon>
        <taxon>Streptococcus</taxon>
    </lineage>
</organism>
<proteinExistence type="inferred from homology"/>
<gene>
    <name evidence="1" type="primary">aroE</name>
    <name type="ordered locus">SZO_04610</name>
</gene>
<evidence type="ECO:0000255" key="1">
    <source>
        <dbReference type="HAMAP-Rule" id="MF_00222"/>
    </source>
</evidence>
<feature type="chain" id="PRO_1000204276" description="Shikimate dehydrogenase (NADP(+))">
    <location>
        <begin position="1"/>
        <end position="294"/>
    </location>
</feature>
<feature type="active site" description="Proton acceptor" evidence="1">
    <location>
        <position position="73"/>
    </location>
</feature>
<feature type="binding site" evidence="1">
    <location>
        <begin position="22"/>
        <end position="24"/>
    </location>
    <ligand>
        <name>shikimate</name>
        <dbReference type="ChEBI" id="CHEBI:36208"/>
    </ligand>
</feature>
<feature type="binding site" evidence="1">
    <location>
        <position position="69"/>
    </location>
    <ligand>
        <name>shikimate</name>
        <dbReference type="ChEBI" id="CHEBI:36208"/>
    </ligand>
</feature>
<feature type="binding site" evidence="1">
    <location>
        <position position="94"/>
    </location>
    <ligand>
        <name>shikimate</name>
        <dbReference type="ChEBI" id="CHEBI:36208"/>
    </ligand>
</feature>
<feature type="binding site" evidence="1">
    <location>
        <position position="111"/>
    </location>
    <ligand>
        <name>shikimate</name>
        <dbReference type="ChEBI" id="CHEBI:36208"/>
    </ligand>
</feature>
<feature type="binding site" evidence="1">
    <location>
        <begin position="135"/>
        <end position="139"/>
    </location>
    <ligand>
        <name>NADP(+)</name>
        <dbReference type="ChEBI" id="CHEBI:58349"/>
    </ligand>
</feature>
<feature type="binding site" evidence="1">
    <location>
        <position position="236"/>
    </location>
    <ligand>
        <name>NADP(+)</name>
        <dbReference type="ChEBI" id="CHEBI:58349"/>
    </ligand>
</feature>
<feature type="binding site" evidence="1">
    <location>
        <position position="238"/>
    </location>
    <ligand>
        <name>shikimate</name>
        <dbReference type="ChEBI" id="CHEBI:36208"/>
    </ligand>
</feature>
<feature type="binding site" evidence="1">
    <location>
        <position position="260"/>
    </location>
    <ligand>
        <name>NADP(+)</name>
        <dbReference type="ChEBI" id="CHEBI:58349"/>
    </ligand>
</feature>
<dbReference type="EC" id="1.1.1.25" evidence="1"/>
<dbReference type="EMBL" id="FM204884">
    <property type="protein sequence ID" value="CAW98390.1"/>
    <property type="molecule type" value="Genomic_DNA"/>
</dbReference>
<dbReference type="SMR" id="C0MHD5"/>
<dbReference type="KEGG" id="seq:SZO_04610"/>
<dbReference type="PATRIC" id="fig|40041.11.peg.491"/>
<dbReference type="eggNOG" id="COG0169">
    <property type="taxonomic scope" value="Bacteria"/>
</dbReference>
<dbReference type="HOGENOM" id="CLU_044063_4_4_9"/>
<dbReference type="UniPathway" id="UPA00053">
    <property type="reaction ID" value="UER00087"/>
</dbReference>
<dbReference type="Proteomes" id="UP000001368">
    <property type="component" value="Chromosome"/>
</dbReference>
<dbReference type="GO" id="GO:0004764">
    <property type="term" value="F:shikimate 3-dehydrogenase (NADP+) activity"/>
    <property type="evidence" value="ECO:0007669"/>
    <property type="project" value="UniProtKB-UniRule"/>
</dbReference>
<dbReference type="GO" id="GO:0008652">
    <property type="term" value="P:amino acid biosynthetic process"/>
    <property type="evidence" value="ECO:0007669"/>
    <property type="project" value="UniProtKB-KW"/>
</dbReference>
<dbReference type="GO" id="GO:0009073">
    <property type="term" value="P:aromatic amino acid family biosynthetic process"/>
    <property type="evidence" value="ECO:0007669"/>
    <property type="project" value="UniProtKB-KW"/>
</dbReference>
<dbReference type="GO" id="GO:0009423">
    <property type="term" value="P:chorismate biosynthetic process"/>
    <property type="evidence" value="ECO:0007669"/>
    <property type="project" value="UniProtKB-UniRule"/>
</dbReference>
<dbReference type="GO" id="GO:0019632">
    <property type="term" value="P:shikimate metabolic process"/>
    <property type="evidence" value="ECO:0007669"/>
    <property type="project" value="TreeGrafter"/>
</dbReference>
<dbReference type="CDD" id="cd01065">
    <property type="entry name" value="NAD_bind_Shikimate_DH"/>
    <property type="match status" value="1"/>
</dbReference>
<dbReference type="FunFam" id="3.40.50.720:FF:000086">
    <property type="entry name" value="Quinate/shikimate dehydrogenase"/>
    <property type="match status" value="1"/>
</dbReference>
<dbReference type="Gene3D" id="3.40.50.10860">
    <property type="entry name" value="Leucine Dehydrogenase, chain A, domain 1"/>
    <property type="match status" value="1"/>
</dbReference>
<dbReference type="Gene3D" id="3.40.50.720">
    <property type="entry name" value="NAD(P)-binding Rossmann-like Domain"/>
    <property type="match status" value="1"/>
</dbReference>
<dbReference type="HAMAP" id="MF_00222">
    <property type="entry name" value="Shikimate_DH_AroE"/>
    <property type="match status" value="1"/>
</dbReference>
<dbReference type="InterPro" id="IPR046346">
    <property type="entry name" value="Aminoacid_DH-like_N_sf"/>
</dbReference>
<dbReference type="InterPro" id="IPR036291">
    <property type="entry name" value="NAD(P)-bd_dom_sf"/>
</dbReference>
<dbReference type="InterPro" id="IPR041121">
    <property type="entry name" value="SDH_C"/>
</dbReference>
<dbReference type="InterPro" id="IPR013708">
    <property type="entry name" value="Shikimate_DH-bd_N"/>
</dbReference>
<dbReference type="InterPro" id="IPR022893">
    <property type="entry name" value="Shikimate_DH_fam"/>
</dbReference>
<dbReference type="NCBIfam" id="NF001319">
    <property type="entry name" value="PRK00258.3-3"/>
    <property type="match status" value="1"/>
</dbReference>
<dbReference type="PANTHER" id="PTHR21089:SF1">
    <property type="entry name" value="BIFUNCTIONAL 3-DEHYDROQUINATE DEHYDRATASE_SHIKIMATE DEHYDROGENASE, CHLOROPLASTIC"/>
    <property type="match status" value="1"/>
</dbReference>
<dbReference type="PANTHER" id="PTHR21089">
    <property type="entry name" value="SHIKIMATE DEHYDROGENASE"/>
    <property type="match status" value="1"/>
</dbReference>
<dbReference type="Pfam" id="PF18317">
    <property type="entry name" value="SDH_C"/>
    <property type="match status" value="1"/>
</dbReference>
<dbReference type="Pfam" id="PF08501">
    <property type="entry name" value="Shikimate_dh_N"/>
    <property type="match status" value="1"/>
</dbReference>
<dbReference type="SUPFAM" id="SSF53223">
    <property type="entry name" value="Aminoacid dehydrogenase-like, N-terminal domain"/>
    <property type="match status" value="1"/>
</dbReference>
<dbReference type="SUPFAM" id="SSF51735">
    <property type="entry name" value="NAD(P)-binding Rossmann-fold domains"/>
    <property type="match status" value="1"/>
</dbReference>
<reference key="1">
    <citation type="journal article" date="2009" name="PLoS Pathog.">
        <title>Genomic evidence for the evolution of Streptococcus equi: host restriction, increased virulence, and genetic exchange with human pathogens.</title>
        <authorList>
            <person name="Holden M.T.G."/>
            <person name="Heather Z."/>
            <person name="Paillot R."/>
            <person name="Steward K.F."/>
            <person name="Webb K."/>
            <person name="Ainslie F."/>
            <person name="Jourdan T."/>
            <person name="Bason N.C."/>
            <person name="Holroyd N.E."/>
            <person name="Mungall K."/>
            <person name="Quail M.A."/>
            <person name="Sanders M."/>
            <person name="Simmonds M."/>
            <person name="Willey D."/>
            <person name="Brooks K."/>
            <person name="Aanensen D.M."/>
            <person name="Spratt B.G."/>
            <person name="Jolley K.A."/>
            <person name="Maiden M.C.J."/>
            <person name="Kehoe M."/>
            <person name="Chanter N."/>
            <person name="Bentley S.D."/>
            <person name="Robinson C."/>
            <person name="Maskell D.J."/>
            <person name="Parkhill J."/>
            <person name="Waller A.S."/>
        </authorList>
    </citation>
    <scope>NUCLEOTIDE SEQUENCE [LARGE SCALE GENOMIC DNA]</scope>
    <source>
        <strain>H70</strain>
    </source>
</reference>
<protein>
    <recommendedName>
        <fullName evidence="1">Shikimate dehydrogenase (NADP(+))</fullName>
        <shortName evidence="1">SDH</shortName>
        <ecNumber evidence="1">1.1.1.25</ecNumber>
    </recommendedName>
</protein>
<comment type="function">
    <text evidence="1">Involved in the biosynthesis of the chorismate, which leads to the biosynthesis of aromatic amino acids. Catalyzes the reversible NADPH linked reduction of 3-dehydroshikimate (DHSA) to yield shikimate (SA).</text>
</comment>
<comment type="catalytic activity">
    <reaction evidence="1">
        <text>shikimate + NADP(+) = 3-dehydroshikimate + NADPH + H(+)</text>
        <dbReference type="Rhea" id="RHEA:17737"/>
        <dbReference type="ChEBI" id="CHEBI:15378"/>
        <dbReference type="ChEBI" id="CHEBI:16630"/>
        <dbReference type="ChEBI" id="CHEBI:36208"/>
        <dbReference type="ChEBI" id="CHEBI:57783"/>
        <dbReference type="ChEBI" id="CHEBI:58349"/>
        <dbReference type="EC" id="1.1.1.25"/>
    </reaction>
</comment>
<comment type="pathway">
    <text evidence="1">Metabolic intermediate biosynthesis; chorismate biosynthesis; chorismate from D-erythrose 4-phosphate and phosphoenolpyruvate: step 4/7.</text>
</comment>
<comment type="subunit">
    <text evidence="1">Homodimer.</text>
</comment>
<comment type="similarity">
    <text evidence="1">Belongs to the shikimate dehydrogenase family.</text>
</comment>
<sequence length="294" mass="31087">MLERLSGQTRLTALLAAPARHSLSPKMHNAAYAKLGLDYAYLAFEVDNSGLAAAVQGMRALGICGANVSMPNKQAIVPLLDELSPAAALAGAVNTVVNTDGKGHLVGHITDGTGAIRSLAEEGVAIKDQIITIAGAGGAGTAIAVQLGLDGAKEIRLFNRKTATFKQAKQVLKGINAKTSALASLQDLADDRAFRRSIAESSIYIDATGVGMKPLEEHSLITDPALIRPDLVVFDLVYHPAETKLLAFAREHGAKKVMNGLGMLLYQGAEAFKLMTGEDMPVAYIRELLCRDKE</sequence>